<protein>
    <recommendedName>
        <fullName evidence="1">Histidine ammonia-lyase</fullName>
        <shortName evidence="1">Histidase</shortName>
        <ecNumber evidence="1">4.3.1.3</ecNumber>
    </recommendedName>
</protein>
<feature type="chain" id="PRO_1000190488" description="Histidine ammonia-lyase">
    <location>
        <begin position="1"/>
        <end position="505"/>
    </location>
</feature>
<feature type="modified residue" description="2,3-didehydroalanine (Ser)" evidence="1">
    <location>
        <position position="142"/>
    </location>
</feature>
<feature type="cross-link" description="5-imidazolinone (Ala-Gly)" evidence="1">
    <location>
        <begin position="141"/>
        <end position="143"/>
    </location>
</feature>
<evidence type="ECO:0000255" key="1">
    <source>
        <dbReference type="HAMAP-Rule" id="MF_00229"/>
    </source>
</evidence>
<reference key="1">
    <citation type="submission" date="2008-10" db="EMBL/GenBank/DDBJ databases">
        <title>Genome sequence of Bacillus cereus AH187.</title>
        <authorList>
            <person name="Dodson R.J."/>
            <person name="Durkin A.S."/>
            <person name="Rosovitz M.J."/>
            <person name="Rasko D.A."/>
            <person name="Kolsto A.B."/>
            <person name="Okstad O.A."/>
            <person name="Ravel J."/>
            <person name="Sutton G."/>
        </authorList>
    </citation>
    <scope>NUCLEOTIDE SEQUENCE [LARGE SCALE GENOMIC DNA]</scope>
    <source>
        <strain>AH187</strain>
    </source>
</reference>
<accession>B7HKJ1</accession>
<dbReference type="EC" id="4.3.1.3" evidence="1"/>
<dbReference type="EMBL" id="CP001177">
    <property type="protein sequence ID" value="ACJ80747.1"/>
    <property type="molecule type" value="Genomic_DNA"/>
</dbReference>
<dbReference type="SMR" id="B7HKJ1"/>
<dbReference type="KEGG" id="bcr:BCAH187_A3685"/>
<dbReference type="HOGENOM" id="CLU_014801_4_0_9"/>
<dbReference type="UniPathway" id="UPA00379">
    <property type="reaction ID" value="UER00549"/>
</dbReference>
<dbReference type="Proteomes" id="UP000002214">
    <property type="component" value="Chromosome"/>
</dbReference>
<dbReference type="GO" id="GO:0005737">
    <property type="term" value="C:cytoplasm"/>
    <property type="evidence" value="ECO:0007669"/>
    <property type="project" value="UniProtKB-SubCell"/>
</dbReference>
<dbReference type="GO" id="GO:0004397">
    <property type="term" value="F:histidine ammonia-lyase activity"/>
    <property type="evidence" value="ECO:0007669"/>
    <property type="project" value="UniProtKB-UniRule"/>
</dbReference>
<dbReference type="GO" id="GO:0019556">
    <property type="term" value="P:L-histidine catabolic process to glutamate and formamide"/>
    <property type="evidence" value="ECO:0007669"/>
    <property type="project" value="UniProtKB-UniPathway"/>
</dbReference>
<dbReference type="GO" id="GO:0019557">
    <property type="term" value="P:L-histidine catabolic process to glutamate and formate"/>
    <property type="evidence" value="ECO:0007669"/>
    <property type="project" value="UniProtKB-UniPathway"/>
</dbReference>
<dbReference type="CDD" id="cd00332">
    <property type="entry name" value="PAL-HAL"/>
    <property type="match status" value="1"/>
</dbReference>
<dbReference type="FunFam" id="1.10.275.10:FF:000008">
    <property type="entry name" value="Histidine ammonia-lyase"/>
    <property type="match status" value="1"/>
</dbReference>
<dbReference type="FunFam" id="1.20.200.10:FF:000003">
    <property type="entry name" value="Histidine ammonia-lyase"/>
    <property type="match status" value="1"/>
</dbReference>
<dbReference type="Gene3D" id="1.20.200.10">
    <property type="entry name" value="Fumarase/aspartase (Central domain)"/>
    <property type="match status" value="1"/>
</dbReference>
<dbReference type="Gene3D" id="1.10.275.10">
    <property type="entry name" value="Fumarase/aspartase (N-terminal domain)"/>
    <property type="match status" value="1"/>
</dbReference>
<dbReference type="HAMAP" id="MF_00229">
    <property type="entry name" value="His_ammonia_lyase"/>
    <property type="match status" value="1"/>
</dbReference>
<dbReference type="InterPro" id="IPR001106">
    <property type="entry name" value="Aromatic_Lyase"/>
</dbReference>
<dbReference type="InterPro" id="IPR024083">
    <property type="entry name" value="Fumarase/histidase_N"/>
</dbReference>
<dbReference type="InterPro" id="IPR005921">
    <property type="entry name" value="HutH"/>
</dbReference>
<dbReference type="InterPro" id="IPR008948">
    <property type="entry name" value="L-Aspartase-like"/>
</dbReference>
<dbReference type="InterPro" id="IPR022313">
    <property type="entry name" value="Phe/His_NH3-lyase_AS"/>
</dbReference>
<dbReference type="NCBIfam" id="TIGR01225">
    <property type="entry name" value="hutH"/>
    <property type="match status" value="1"/>
</dbReference>
<dbReference type="NCBIfam" id="NF006871">
    <property type="entry name" value="PRK09367.1"/>
    <property type="match status" value="1"/>
</dbReference>
<dbReference type="PANTHER" id="PTHR10362">
    <property type="entry name" value="HISTIDINE AMMONIA-LYASE"/>
    <property type="match status" value="1"/>
</dbReference>
<dbReference type="Pfam" id="PF00221">
    <property type="entry name" value="Lyase_aromatic"/>
    <property type="match status" value="1"/>
</dbReference>
<dbReference type="SUPFAM" id="SSF48557">
    <property type="entry name" value="L-aspartase-like"/>
    <property type="match status" value="1"/>
</dbReference>
<dbReference type="PROSITE" id="PS00488">
    <property type="entry name" value="PAL_HISTIDASE"/>
    <property type="match status" value="1"/>
</dbReference>
<sequence>MITLTGHTLTIEEMKRLLLEGEGVTACPNSMQKVAECREVVEKIVEDGKVVYGITTGFGKFSDVLIQKDDVKALQHNLIQSHACGIGDPFPEEVSRGMLILRANTMLKGVSGVRPLVVNMLLEFVNRKIHPVVPQQGSLGASGDLAPLSHLALVLLGEGEVFYKGKRVHAMVALTEEGLEPIELEAKEGLALINGTQAMTAQGVLSYIEAEATAYQAEFIASMTIEGLQGIIDAFDENVHKARGYKEQVEVASRIRDILHDSKLTTKQGELRVQDAYSLRCIPQVHGASWQVLNYVKEKLEIEMNAATDNPLIFDGGEKVISGGNFHGQPIAFAMDFLKVGMAELANISERRIERLVNPQLNDLPPFLSPEPGLQSGAMIMQYAAASLVSENKTLAHPASVDSIPSSANQEDHVSMGTIASRHAHQIIQNVRRVLSIEMICAMQAAEYRGIENMSTVTKSFYHQGRQQVPSITNDRIFSTDIENIAYWLKTNYSIKERLDVNAAL</sequence>
<comment type="catalytic activity">
    <reaction evidence="1">
        <text>L-histidine = trans-urocanate + NH4(+)</text>
        <dbReference type="Rhea" id="RHEA:21232"/>
        <dbReference type="ChEBI" id="CHEBI:17771"/>
        <dbReference type="ChEBI" id="CHEBI:28938"/>
        <dbReference type="ChEBI" id="CHEBI:57595"/>
        <dbReference type="EC" id="4.3.1.3"/>
    </reaction>
</comment>
<comment type="pathway">
    <text evidence="1">Amino-acid degradation; L-histidine degradation into L-glutamate; N-formimidoyl-L-glutamate from L-histidine: step 1/3.</text>
</comment>
<comment type="subcellular location">
    <subcellularLocation>
        <location evidence="1">Cytoplasm</location>
    </subcellularLocation>
</comment>
<comment type="PTM">
    <text evidence="1">Contains an active site 4-methylidene-imidazol-5-one (MIO), which is formed autocatalytically by cyclization and dehydration of residues Ala-Ser-Gly.</text>
</comment>
<comment type="similarity">
    <text evidence="1">Belongs to the PAL/histidase family.</text>
</comment>
<keyword id="KW-0963">Cytoplasm</keyword>
<keyword id="KW-0369">Histidine metabolism</keyword>
<keyword id="KW-0456">Lyase</keyword>
<gene>
    <name evidence="1" type="primary">hutH</name>
    <name type="ordered locus">BCAH187_A3685</name>
</gene>
<organism>
    <name type="scientific">Bacillus cereus (strain AH187)</name>
    <dbReference type="NCBI Taxonomy" id="405534"/>
    <lineage>
        <taxon>Bacteria</taxon>
        <taxon>Bacillati</taxon>
        <taxon>Bacillota</taxon>
        <taxon>Bacilli</taxon>
        <taxon>Bacillales</taxon>
        <taxon>Bacillaceae</taxon>
        <taxon>Bacillus</taxon>
        <taxon>Bacillus cereus group</taxon>
    </lineage>
</organism>
<proteinExistence type="inferred from homology"/>
<name>HUTH_BACC7</name>